<proteinExistence type="inferred from homology"/>
<reference key="1">
    <citation type="journal article" date="2004" name="Proc. Natl. Acad. Sci. U.S.A.">
        <title>Genomic analysis of Bacteroides fragilis reveals extensive DNA inversions regulating cell surface adaptation.</title>
        <authorList>
            <person name="Kuwahara T."/>
            <person name="Yamashita A."/>
            <person name="Hirakawa H."/>
            <person name="Nakayama H."/>
            <person name="Toh H."/>
            <person name="Okada N."/>
            <person name="Kuhara S."/>
            <person name="Hattori M."/>
            <person name="Hayashi T."/>
            <person name="Ohnishi Y."/>
        </authorList>
    </citation>
    <scope>NUCLEOTIDE SEQUENCE [LARGE SCALE GENOMIC DNA]</scope>
    <source>
        <strain>YCH46</strain>
    </source>
</reference>
<keyword id="KW-0963">Cytoplasm</keyword>
<keyword id="KW-0275">Fatty acid biosynthesis</keyword>
<keyword id="KW-0276">Fatty acid metabolism</keyword>
<keyword id="KW-0444">Lipid biosynthesis</keyword>
<keyword id="KW-0443">Lipid metabolism</keyword>
<keyword id="KW-0596">Phosphopantetheine</keyword>
<keyword id="KW-0597">Phosphoprotein</keyword>
<name>ACP_BACFR</name>
<feature type="chain" id="PRO_0000180100" description="Acyl carrier protein">
    <location>
        <begin position="1"/>
        <end position="78"/>
    </location>
</feature>
<feature type="domain" description="Carrier" evidence="2">
    <location>
        <begin position="2"/>
        <end position="77"/>
    </location>
</feature>
<feature type="modified residue" description="O-(pantetheine 4'-phosphoryl)serine" evidence="2">
    <location>
        <position position="37"/>
    </location>
</feature>
<sequence>MSEIASRVKAIIVDKLGVEESEVTETASFTNDLGADSLDTVELIMEFEKEFGISIPDDQAEKIGTVQDAVAYIEEHAK</sequence>
<dbReference type="EMBL" id="AP006841">
    <property type="protein sequence ID" value="BAD46969.1"/>
    <property type="molecule type" value="Genomic_DNA"/>
</dbReference>
<dbReference type="RefSeq" id="WP_005779510.1">
    <property type="nucleotide sequence ID" value="NZ_UYXF01000025.1"/>
</dbReference>
<dbReference type="RefSeq" id="YP_097503.1">
    <property type="nucleotide sequence ID" value="NC_006347.1"/>
</dbReference>
<dbReference type="SMR" id="Q64ZV7"/>
<dbReference type="STRING" id="295405.BF0220"/>
<dbReference type="KEGG" id="bfr:BF0220"/>
<dbReference type="PATRIC" id="fig|295405.11.peg.250"/>
<dbReference type="HOGENOM" id="CLU_108696_5_1_10"/>
<dbReference type="OrthoDB" id="9804551at2"/>
<dbReference type="UniPathway" id="UPA00094"/>
<dbReference type="Proteomes" id="UP000002197">
    <property type="component" value="Chromosome"/>
</dbReference>
<dbReference type="GO" id="GO:0005829">
    <property type="term" value="C:cytosol"/>
    <property type="evidence" value="ECO:0007669"/>
    <property type="project" value="TreeGrafter"/>
</dbReference>
<dbReference type="GO" id="GO:0016020">
    <property type="term" value="C:membrane"/>
    <property type="evidence" value="ECO:0007669"/>
    <property type="project" value="GOC"/>
</dbReference>
<dbReference type="GO" id="GO:0000035">
    <property type="term" value="F:acyl binding"/>
    <property type="evidence" value="ECO:0007669"/>
    <property type="project" value="TreeGrafter"/>
</dbReference>
<dbReference type="GO" id="GO:0000036">
    <property type="term" value="F:acyl carrier activity"/>
    <property type="evidence" value="ECO:0007669"/>
    <property type="project" value="UniProtKB-UniRule"/>
</dbReference>
<dbReference type="GO" id="GO:0031177">
    <property type="term" value="F:phosphopantetheine binding"/>
    <property type="evidence" value="ECO:0007669"/>
    <property type="project" value="InterPro"/>
</dbReference>
<dbReference type="GO" id="GO:0009245">
    <property type="term" value="P:lipid A biosynthetic process"/>
    <property type="evidence" value="ECO:0007669"/>
    <property type="project" value="TreeGrafter"/>
</dbReference>
<dbReference type="FunFam" id="1.10.1200.10:FF:000001">
    <property type="entry name" value="Acyl carrier protein"/>
    <property type="match status" value="1"/>
</dbReference>
<dbReference type="Gene3D" id="1.10.1200.10">
    <property type="entry name" value="ACP-like"/>
    <property type="match status" value="1"/>
</dbReference>
<dbReference type="HAMAP" id="MF_01217">
    <property type="entry name" value="Acyl_carrier"/>
    <property type="match status" value="1"/>
</dbReference>
<dbReference type="InterPro" id="IPR003231">
    <property type="entry name" value="ACP"/>
</dbReference>
<dbReference type="InterPro" id="IPR036736">
    <property type="entry name" value="ACP-like_sf"/>
</dbReference>
<dbReference type="InterPro" id="IPR020806">
    <property type="entry name" value="PKS_PP-bd"/>
</dbReference>
<dbReference type="InterPro" id="IPR009081">
    <property type="entry name" value="PP-bd_ACP"/>
</dbReference>
<dbReference type="InterPro" id="IPR006162">
    <property type="entry name" value="Ppantetheine_attach_site"/>
</dbReference>
<dbReference type="NCBIfam" id="TIGR00517">
    <property type="entry name" value="acyl_carrier"/>
    <property type="match status" value="1"/>
</dbReference>
<dbReference type="NCBIfam" id="NF002148">
    <property type="entry name" value="PRK00982.1-2"/>
    <property type="match status" value="1"/>
</dbReference>
<dbReference type="NCBIfam" id="NF002149">
    <property type="entry name" value="PRK00982.1-3"/>
    <property type="match status" value="1"/>
</dbReference>
<dbReference type="NCBIfam" id="NF002150">
    <property type="entry name" value="PRK00982.1-4"/>
    <property type="match status" value="1"/>
</dbReference>
<dbReference type="NCBIfam" id="NF002151">
    <property type="entry name" value="PRK00982.1-5"/>
    <property type="match status" value="1"/>
</dbReference>
<dbReference type="PANTHER" id="PTHR20863">
    <property type="entry name" value="ACYL CARRIER PROTEIN"/>
    <property type="match status" value="1"/>
</dbReference>
<dbReference type="PANTHER" id="PTHR20863:SF76">
    <property type="entry name" value="CARRIER DOMAIN-CONTAINING PROTEIN"/>
    <property type="match status" value="1"/>
</dbReference>
<dbReference type="Pfam" id="PF00550">
    <property type="entry name" value="PP-binding"/>
    <property type="match status" value="1"/>
</dbReference>
<dbReference type="SMART" id="SM00823">
    <property type="entry name" value="PKS_PP"/>
    <property type="match status" value="1"/>
</dbReference>
<dbReference type="SUPFAM" id="SSF47336">
    <property type="entry name" value="ACP-like"/>
    <property type="match status" value="1"/>
</dbReference>
<dbReference type="PROSITE" id="PS50075">
    <property type="entry name" value="CARRIER"/>
    <property type="match status" value="1"/>
</dbReference>
<dbReference type="PROSITE" id="PS00012">
    <property type="entry name" value="PHOSPHOPANTETHEINE"/>
    <property type="match status" value="1"/>
</dbReference>
<organism>
    <name type="scientific">Bacteroides fragilis (strain YCH46)</name>
    <dbReference type="NCBI Taxonomy" id="295405"/>
    <lineage>
        <taxon>Bacteria</taxon>
        <taxon>Pseudomonadati</taxon>
        <taxon>Bacteroidota</taxon>
        <taxon>Bacteroidia</taxon>
        <taxon>Bacteroidales</taxon>
        <taxon>Bacteroidaceae</taxon>
        <taxon>Bacteroides</taxon>
    </lineage>
</organism>
<comment type="function">
    <text evidence="1">Carrier of the growing fatty acid chain in fatty acid biosynthesis.</text>
</comment>
<comment type="pathway">
    <text evidence="1">Lipid metabolism; fatty acid biosynthesis.</text>
</comment>
<comment type="subcellular location">
    <subcellularLocation>
        <location evidence="1">Cytoplasm</location>
    </subcellularLocation>
</comment>
<comment type="PTM">
    <text evidence="1">4'-phosphopantetheine is transferred from CoA to a specific serine of apo-ACP by AcpS. This modification is essential for activity because fatty acids are bound in thioester linkage to the sulfhydryl of the prosthetic group.</text>
</comment>
<comment type="similarity">
    <text evidence="1">Belongs to the acyl carrier protein (ACP) family.</text>
</comment>
<evidence type="ECO:0000255" key="1">
    <source>
        <dbReference type="HAMAP-Rule" id="MF_01217"/>
    </source>
</evidence>
<evidence type="ECO:0000255" key="2">
    <source>
        <dbReference type="PROSITE-ProRule" id="PRU00258"/>
    </source>
</evidence>
<accession>Q64ZV7</accession>
<gene>
    <name evidence="1" type="primary">acpP</name>
    <name type="ordered locus">BF0220</name>
</gene>
<protein>
    <recommendedName>
        <fullName evidence="1">Acyl carrier protein</fullName>
        <shortName evidence="1">ACP</shortName>
    </recommendedName>
</protein>